<gene>
    <name evidence="1" type="primary">mutH</name>
    <name type="ordered locus">SPA2870</name>
</gene>
<evidence type="ECO:0000255" key="1">
    <source>
        <dbReference type="HAMAP-Rule" id="MF_00759"/>
    </source>
</evidence>
<keyword id="KW-0963">Cytoplasm</keyword>
<keyword id="KW-0227">DNA damage</keyword>
<keyword id="KW-0234">DNA repair</keyword>
<keyword id="KW-0255">Endonuclease</keyword>
<keyword id="KW-0378">Hydrolase</keyword>
<keyword id="KW-0540">Nuclease</keyword>
<organism>
    <name type="scientific">Salmonella paratyphi A (strain ATCC 9150 / SARB42)</name>
    <dbReference type="NCBI Taxonomy" id="295319"/>
    <lineage>
        <taxon>Bacteria</taxon>
        <taxon>Pseudomonadati</taxon>
        <taxon>Pseudomonadota</taxon>
        <taxon>Gammaproteobacteria</taxon>
        <taxon>Enterobacterales</taxon>
        <taxon>Enterobacteriaceae</taxon>
        <taxon>Salmonella</taxon>
    </lineage>
</organism>
<feature type="chain" id="PRO_1000046704" description="DNA mismatch repair protein MutH">
    <location>
        <begin position="1"/>
        <end position="231"/>
    </location>
</feature>
<sequence>MSALCPLPTPPASEALLLAQARQLSGYTLGELAAMAGITTPKDLKRDKGWIGVLLEIWLGASAGSKPEQDFAALGVELKTIPVDSLGRPLETTFVCVAPLTGNSGVTWETSHVRHKLKRVLWVPVEGNRSIPLAERRVGSPLLWSPSEEEDRQLRLDWEELMDMIVLGQVERITARHGEVLQLRPKAVNARALTEAIGARGEPILTLPRGFYLKKNFTQALLARHFLLQNP</sequence>
<protein>
    <recommendedName>
        <fullName evidence="1">DNA mismatch repair protein MutH</fullName>
    </recommendedName>
    <alternativeName>
        <fullName evidence="1">Methyl-directed mismatch repair protein</fullName>
    </alternativeName>
</protein>
<reference key="1">
    <citation type="journal article" date="2004" name="Nat. Genet.">
        <title>Comparison of genome degradation in Paratyphi A and Typhi, human-restricted serovars of Salmonella enterica that cause typhoid.</title>
        <authorList>
            <person name="McClelland M."/>
            <person name="Sanderson K.E."/>
            <person name="Clifton S.W."/>
            <person name="Latreille P."/>
            <person name="Porwollik S."/>
            <person name="Sabo A."/>
            <person name="Meyer R."/>
            <person name="Bieri T."/>
            <person name="Ozersky P."/>
            <person name="McLellan M."/>
            <person name="Harkins C.R."/>
            <person name="Wang C."/>
            <person name="Nguyen C."/>
            <person name="Berghoff A."/>
            <person name="Elliott G."/>
            <person name="Kohlberg S."/>
            <person name="Strong C."/>
            <person name="Du F."/>
            <person name="Carter J."/>
            <person name="Kremizki C."/>
            <person name="Layman D."/>
            <person name="Leonard S."/>
            <person name="Sun H."/>
            <person name="Fulton L."/>
            <person name="Nash W."/>
            <person name="Miner T."/>
            <person name="Minx P."/>
            <person name="Delehaunty K."/>
            <person name="Fronick C."/>
            <person name="Magrini V."/>
            <person name="Nhan M."/>
            <person name="Warren W."/>
            <person name="Florea L."/>
            <person name="Spieth J."/>
            <person name="Wilson R.K."/>
        </authorList>
    </citation>
    <scope>NUCLEOTIDE SEQUENCE [LARGE SCALE GENOMIC DNA]</scope>
    <source>
        <strain>ATCC 9150 / SARB42</strain>
    </source>
</reference>
<comment type="function">
    <text evidence="1">Sequence-specific endonuclease that cleaves unmethylated GATC sequences. It is involved in DNA mismatch repair.</text>
</comment>
<comment type="subcellular location">
    <subcellularLocation>
        <location evidence="1">Cytoplasm</location>
    </subcellularLocation>
</comment>
<comment type="similarity">
    <text evidence="1">Belongs to the MutH family.</text>
</comment>
<name>MUTH_SALPA</name>
<dbReference type="EMBL" id="CP000026">
    <property type="protein sequence ID" value="AAV78715.1"/>
    <property type="molecule type" value="Genomic_DNA"/>
</dbReference>
<dbReference type="RefSeq" id="WP_001274937.1">
    <property type="nucleotide sequence ID" value="NC_006511.1"/>
</dbReference>
<dbReference type="SMR" id="Q5PEN2"/>
<dbReference type="KEGG" id="spt:SPA2870"/>
<dbReference type="HOGENOM" id="CLU_086669_0_0_6"/>
<dbReference type="Proteomes" id="UP000008185">
    <property type="component" value="Chromosome"/>
</dbReference>
<dbReference type="GO" id="GO:0005737">
    <property type="term" value="C:cytoplasm"/>
    <property type="evidence" value="ECO:0007669"/>
    <property type="project" value="UniProtKB-SubCell"/>
</dbReference>
<dbReference type="GO" id="GO:0003677">
    <property type="term" value="F:DNA binding"/>
    <property type="evidence" value="ECO:0007669"/>
    <property type="project" value="InterPro"/>
</dbReference>
<dbReference type="GO" id="GO:0004519">
    <property type="term" value="F:endonuclease activity"/>
    <property type="evidence" value="ECO:0007669"/>
    <property type="project" value="UniProtKB-UniRule"/>
</dbReference>
<dbReference type="GO" id="GO:0006304">
    <property type="term" value="P:DNA modification"/>
    <property type="evidence" value="ECO:0007669"/>
    <property type="project" value="InterPro"/>
</dbReference>
<dbReference type="GO" id="GO:0006298">
    <property type="term" value="P:mismatch repair"/>
    <property type="evidence" value="ECO:0007669"/>
    <property type="project" value="UniProtKB-UniRule"/>
</dbReference>
<dbReference type="CDD" id="cd00583">
    <property type="entry name" value="MutH-like"/>
    <property type="match status" value="1"/>
</dbReference>
<dbReference type="FunFam" id="3.40.600.10:FF:000001">
    <property type="entry name" value="DNA mismatch repair protein MutH"/>
    <property type="match status" value="1"/>
</dbReference>
<dbReference type="Gene3D" id="3.40.600.10">
    <property type="entry name" value="DNA mismatch repair MutH/Restriction endonuclease, type II"/>
    <property type="match status" value="1"/>
</dbReference>
<dbReference type="HAMAP" id="MF_00759">
    <property type="entry name" value="MutH"/>
    <property type="match status" value="1"/>
</dbReference>
<dbReference type="InterPro" id="IPR004230">
    <property type="entry name" value="DNA_mismatch_repair_MutH"/>
</dbReference>
<dbReference type="InterPro" id="IPR011337">
    <property type="entry name" value="DNA_rep_MutH/RE_typeII_Sau3AI"/>
</dbReference>
<dbReference type="InterPro" id="IPR037057">
    <property type="entry name" value="DNA_rep_MutH/T2_RE_sf"/>
</dbReference>
<dbReference type="InterPro" id="IPR011335">
    <property type="entry name" value="Restrct_endonuc-II-like"/>
</dbReference>
<dbReference type="NCBIfam" id="TIGR02248">
    <property type="entry name" value="mutH_TIGR"/>
    <property type="match status" value="1"/>
</dbReference>
<dbReference type="NCBIfam" id="NF003458">
    <property type="entry name" value="PRK05070.1"/>
    <property type="match status" value="1"/>
</dbReference>
<dbReference type="Pfam" id="PF02976">
    <property type="entry name" value="MutH"/>
    <property type="match status" value="1"/>
</dbReference>
<dbReference type="SMART" id="SM00927">
    <property type="entry name" value="MutH"/>
    <property type="match status" value="1"/>
</dbReference>
<dbReference type="SUPFAM" id="SSF52980">
    <property type="entry name" value="Restriction endonuclease-like"/>
    <property type="match status" value="1"/>
</dbReference>
<accession>Q5PEN2</accession>
<proteinExistence type="inferred from homology"/>